<sequence length="28" mass="3114">RDPTGCEVDQVIMVKRHGERYPSPSAGK</sequence>
<feature type="chain" id="PRO_0000114471" description="3-phytase B">
    <location>
        <begin position="1" status="less than"/>
        <end position="28" status="greater than"/>
    </location>
</feature>
<feature type="region of interest" description="Disordered" evidence="2">
    <location>
        <begin position="1"/>
        <end position="28"/>
    </location>
</feature>
<feature type="active site" description="Nucleophile" evidence="1">
    <location>
        <position position="17"/>
    </location>
</feature>
<feature type="non-terminal residue">
    <location>
        <position position="1"/>
    </location>
</feature>
<feature type="non-terminal residue">
    <location>
        <position position="28"/>
    </location>
</feature>
<evidence type="ECO:0000250" key="1"/>
<evidence type="ECO:0000256" key="2">
    <source>
        <dbReference type="SAM" id="MobiDB-lite"/>
    </source>
</evidence>
<evidence type="ECO:0000305" key="3"/>
<protein>
    <recommendedName>
        <fullName>3-phytase B</fullName>
        <ecNumber>3.1.3.8</ecNumber>
    </recommendedName>
    <alternativeName>
        <fullName>3 phytase B</fullName>
    </alternativeName>
    <alternativeName>
        <fullName>Myo-inositol hexakisphosphate phosphohydrolase B</fullName>
    </alternativeName>
    <alternativeName>
        <fullName>Myo-inositol-hexaphosphate 3-phosphohydrolase B</fullName>
    </alternativeName>
</protein>
<dbReference type="EC" id="3.1.3.8"/>
<dbReference type="PIR" id="JN0715">
    <property type="entry name" value="JN0715"/>
</dbReference>
<dbReference type="SMR" id="P81440"/>
<dbReference type="GO" id="GO:0016158">
    <property type="term" value="F:3-phytase activity"/>
    <property type="evidence" value="ECO:0007669"/>
    <property type="project" value="UniProtKB-EC"/>
</dbReference>
<dbReference type="Gene3D" id="3.40.50.1240">
    <property type="entry name" value="Phosphoglycerate mutase-like"/>
    <property type="match status" value="1"/>
</dbReference>
<dbReference type="InterPro" id="IPR033379">
    <property type="entry name" value="Acid_Pase_AS"/>
</dbReference>
<dbReference type="InterPro" id="IPR029033">
    <property type="entry name" value="His_PPase_superfam"/>
</dbReference>
<dbReference type="SUPFAM" id="SSF53254">
    <property type="entry name" value="Phosphoglycerate mutase-like"/>
    <property type="match status" value="1"/>
</dbReference>
<dbReference type="PROSITE" id="PS00616">
    <property type="entry name" value="HIS_ACID_PHOSPHAT_1"/>
    <property type="match status" value="1"/>
</dbReference>
<proteinExistence type="evidence at protein level"/>
<reference key="1">
    <citation type="journal article" date="1993" name="Biochem. Biophys. Res. Commun.">
        <title>Identification of active-site residues in Aspergillus ficuum extracellular pH 2.5 optimum acid phosphatase.</title>
        <authorList>
            <person name="Ullah A.H."/>
            <person name="Dischinger H.C. Jr."/>
        </authorList>
    </citation>
    <scope>PROTEIN SEQUENCE</scope>
</reference>
<organism>
    <name type="scientific">Aspergillus ficuum</name>
    <dbReference type="NCBI Taxonomy" id="5058"/>
    <lineage>
        <taxon>Eukaryota</taxon>
        <taxon>Fungi</taxon>
        <taxon>Dikarya</taxon>
        <taxon>Ascomycota</taxon>
        <taxon>Pezizomycotina</taxon>
        <taxon>Eurotiomycetes</taxon>
        <taxon>Eurotiomycetidae</taxon>
        <taxon>Eurotiales</taxon>
        <taxon>Aspergillaceae</taxon>
        <taxon>Aspergillus</taxon>
    </lineage>
</organism>
<name>PHYB_ASPFI</name>
<gene>
    <name type="primary">phyB</name>
</gene>
<keyword id="KW-0903">Direct protein sequencing</keyword>
<keyword id="KW-0378">Hydrolase</keyword>
<accession>P81440</accession>
<comment type="function">
    <text>Catalyzes the hydrolysis of inorganic orthophosphate from phytate.</text>
</comment>
<comment type="catalytic activity">
    <reaction>
        <text>1D-myo-inositol hexakisphosphate + H2O = 1D-myo-inositol 1,2,4,5,6-pentakisphosphate + phosphate</text>
        <dbReference type="Rhea" id="RHEA:16989"/>
        <dbReference type="ChEBI" id="CHEBI:15377"/>
        <dbReference type="ChEBI" id="CHEBI:43474"/>
        <dbReference type="ChEBI" id="CHEBI:57798"/>
        <dbReference type="ChEBI" id="CHEBI:58130"/>
        <dbReference type="EC" id="3.1.3.8"/>
    </reaction>
</comment>
<comment type="similarity">
    <text evidence="3">Belongs to the histidine acid phosphatase family.</text>
</comment>